<organism>
    <name type="scientific">Desulforudis audaxviator (strain MP104C)</name>
    <dbReference type="NCBI Taxonomy" id="477974"/>
    <lineage>
        <taxon>Bacteria</taxon>
        <taxon>Bacillati</taxon>
        <taxon>Bacillota</taxon>
        <taxon>Clostridia</taxon>
        <taxon>Thermoanaerobacterales</taxon>
        <taxon>Candidatus Desulforudaceae</taxon>
        <taxon>Candidatus Desulforudis</taxon>
    </lineage>
</organism>
<dbReference type="EMBL" id="CP000860">
    <property type="protein sequence ID" value="ACA58769.1"/>
    <property type="status" value="ALT_INIT"/>
    <property type="molecule type" value="Genomic_DNA"/>
</dbReference>
<dbReference type="RefSeq" id="WP_041570708.1">
    <property type="nucleotide sequence ID" value="NC_010424.1"/>
</dbReference>
<dbReference type="SMR" id="B1I1K9"/>
<dbReference type="STRING" id="477974.Daud_0208"/>
<dbReference type="KEGG" id="dau:Daud_0208"/>
<dbReference type="eggNOG" id="COG0267">
    <property type="taxonomic scope" value="Bacteria"/>
</dbReference>
<dbReference type="HOGENOM" id="CLU_190949_3_0_9"/>
<dbReference type="OrthoDB" id="9801333at2"/>
<dbReference type="Proteomes" id="UP000008544">
    <property type="component" value="Chromosome"/>
</dbReference>
<dbReference type="GO" id="GO:0005737">
    <property type="term" value="C:cytoplasm"/>
    <property type="evidence" value="ECO:0007669"/>
    <property type="project" value="UniProtKB-ARBA"/>
</dbReference>
<dbReference type="GO" id="GO:1990904">
    <property type="term" value="C:ribonucleoprotein complex"/>
    <property type="evidence" value="ECO:0007669"/>
    <property type="project" value="UniProtKB-KW"/>
</dbReference>
<dbReference type="GO" id="GO:0005840">
    <property type="term" value="C:ribosome"/>
    <property type="evidence" value="ECO:0007669"/>
    <property type="project" value="UniProtKB-KW"/>
</dbReference>
<dbReference type="GO" id="GO:0003735">
    <property type="term" value="F:structural constituent of ribosome"/>
    <property type="evidence" value="ECO:0007669"/>
    <property type="project" value="InterPro"/>
</dbReference>
<dbReference type="GO" id="GO:0006412">
    <property type="term" value="P:translation"/>
    <property type="evidence" value="ECO:0007669"/>
    <property type="project" value="UniProtKB-UniRule"/>
</dbReference>
<dbReference type="Gene3D" id="2.20.28.120">
    <property type="entry name" value="Ribosomal protein L33"/>
    <property type="match status" value="1"/>
</dbReference>
<dbReference type="HAMAP" id="MF_00294">
    <property type="entry name" value="Ribosomal_bL33"/>
    <property type="match status" value="1"/>
</dbReference>
<dbReference type="InterPro" id="IPR001705">
    <property type="entry name" value="Ribosomal_bL33"/>
</dbReference>
<dbReference type="InterPro" id="IPR018264">
    <property type="entry name" value="Ribosomal_bL33_CS"/>
</dbReference>
<dbReference type="InterPro" id="IPR038584">
    <property type="entry name" value="Ribosomal_bL33_sf"/>
</dbReference>
<dbReference type="InterPro" id="IPR011332">
    <property type="entry name" value="Ribosomal_zn-bd"/>
</dbReference>
<dbReference type="NCBIfam" id="NF001764">
    <property type="entry name" value="PRK00504.1"/>
    <property type="match status" value="1"/>
</dbReference>
<dbReference type="NCBIfam" id="NF001860">
    <property type="entry name" value="PRK00595.1"/>
    <property type="match status" value="1"/>
</dbReference>
<dbReference type="NCBIfam" id="TIGR01023">
    <property type="entry name" value="rpmG_bact"/>
    <property type="match status" value="1"/>
</dbReference>
<dbReference type="PANTHER" id="PTHR43168">
    <property type="entry name" value="50S RIBOSOMAL PROTEIN L33, CHLOROPLASTIC"/>
    <property type="match status" value="1"/>
</dbReference>
<dbReference type="PANTHER" id="PTHR43168:SF2">
    <property type="entry name" value="LARGE RIBOSOMAL SUBUNIT PROTEIN BL33C"/>
    <property type="match status" value="1"/>
</dbReference>
<dbReference type="Pfam" id="PF00471">
    <property type="entry name" value="Ribosomal_L33"/>
    <property type="match status" value="1"/>
</dbReference>
<dbReference type="SUPFAM" id="SSF57829">
    <property type="entry name" value="Zn-binding ribosomal proteins"/>
    <property type="match status" value="1"/>
</dbReference>
<dbReference type="PROSITE" id="PS00582">
    <property type="entry name" value="RIBOSOMAL_L33"/>
    <property type="match status" value="1"/>
</dbReference>
<name>RL33_DESAP</name>
<sequence>MRVNVTLACTECKRRNYITTKNKKNDPNRIEMKKYCRWCGSHTMHKETK</sequence>
<comment type="similarity">
    <text evidence="1">Belongs to the bacterial ribosomal protein bL33 family.</text>
</comment>
<comment type="sequence caution" evidence="2">
    <conflict type="erroneous initiation">
        <sequence resource="EMBL-CDS" id="ACA58769"/>
    </conflict>
</comment>
<keyword id="KW-1185">Reference proteome</keyword>
<keyword id="KW-0687">Ribonucleoprotein</keyword>
<keyword id="KW-0689">Ribosomal protein</keyword>
<feature type="chain" id="PRO_0000356448" description="Large ribosomal subunit protein bL33">
    <location>
        <begin position="1"/>
        <end position="49"/>
    </location>
</feature>
<proteinExistence type="inferred from homology"/>
<protein>
    <recommendedName>
        <fullName evidence="1">Large ribosomal subunit protein bL33</fullName>
    </recommendedName>
    <alternativeName>
        <fullName evidence="2">50S ribosomal protein L33</fullName>
    </alternativeName>
</protein>
<evidence type="ECO:0000255" key="1">
    <source>
        <dbReference type="HAMAP-Rule" id="MF_00294"/>
    </source>
</evidence>
<evidence type="ECO:0000305" key="2"/>
<gene>
    <name evidence="1" type="primary">rpmG</name>
    <name type="ordered locus">Daud_0208</name>
</gene>
<accession>B1I1K9</accession>
<reference key="1">
    <citation type="submission" date="2007-10" db="EMBL/GenBank/DDBJ databases">
        <title>Complete sequence of chromosome of Desulforudis audaxviator MP104C.</title>
        <authorList>
            <person name="Copeland A."/>
            <person name="Lucas S."/>
            <person name="Lapidus A."/>
            <person name="Barry K."/>
            <person name="Glavina del Rio T."/>
            <person name="Dalin E."/>
            <person name="Tice H."/>
            <person name="Bruce D."/>
            <person name="Pitluck S."/>
            <person name="Lowry S.R."/>
            <person name="Larimer F."/>
            <person name="Land M.L."/>
            <person name="Hauser L."/>
            <person name="Kyrpides N."/>
            <person name="Ivanova N.N."/>
            <person name="Richardson P."/>
        </authorList>
    </citation>
    <scope>NUCLEOTIDE SEQUENCE [LARGE SCALE GENOMIC DNA]</scope>
    <source>
        <strain>MP104C</strain>
    </source>
</reference>